<feature type="chain" id="PRO_1000095077" description="Elongation factor 1-alpha">
    <location>
        <begin position="1"/>
        <end position="428"/>
    </location>
</feature>
<feature type="domain" description="tr-type G">
    <location>
        <begin position="5"/>
        <end position="225"/>
    </location>
</feature>
<feature type="region of interest" description="G1" evidence="1">
    <location>
        <begin position="14"/>
        <end position="21"/>
    </location>
</feature>
<feature type="region of interest" description="G2" evidence="1">
    <location>
        <begin position="70"/>
        <end position="74"/>
    </location>
</feature>
<feature type="region of interest" description="G3" evidence="1">
    <location>
        <begin position="91"/>
        <end position="94"/>
    </location>
</feature>
<feature type="region of interest" description="G4" evidence="1">
    <location>
        <begin position="149"/>
        <end position="152"/>
    </location>
</feature>
<feature type="region of interest" description="G5" evidence="1">
    <location>
        <begin position="189"/>
        <end position="191"/>
    </location>
</feature>
<feature type="binding site" evidence="2">
    <location>
        <begin position="14"/>
        <end position="21"/>
    </location>
    <ligand>
        <name>GTP</name>
        <dbReference type="ChEBI" id="CHEBI:37565"/>
    </ligand>
</feature>
<feature type="binding site" evidence="2">
    <location>
        <position position="21"/>
    </location>
    <ligand>
        <name>Mg(2+)</name>
        <dbReference type="ChEBI" id="CHEBI:18420"/>
    </ligand>
</feature>
<feature type="binding site" evidence="2">
    <location>
        <begin position="91"/>
        <end position="95"/>
    </location>
    <ligand>
        <name>GTP</name>
        <dbReference type="ChEBI" id="CHEBI:37565"/>
    </ligand>
</feature>
<feature type="binding site" evidence="2">
    <location>
        <begin position="149"/>
        <end position="152"/>
    </location>
    <ligand>
        <name>GTP</name>
        <dbReference type="ChEBI" id="CHEBI:37565"/>
    </ligand>
</feature>
<dbReference type="EC" id="3.6.5.3" evidence="2"/>
<dbReference type="EMBL" id="CP000867">
    <property type="protein sequence ID" value="ABX02116.1"/>
    <property type="molecule type" value="Genomic_DNA"/>
</dbReference>
<dbReference type="SMR" id="A9A9U3"/>
<dbReference type="STRING" id="444158.MmarC6_1303"/>
<dbReference type="KEGG" id="mmx:MmarC6_1303"/>
<dbReference type="eggNOG" id="arCOG01561">
    <property type="taxonomic scope" value="Archaea"/>
</dbReference>
<dbReference type="HOGENOM" id="CLU_007265_3_5_2"/>
<dbReference type="OrthoDB" id="371718at2157"/>
<dbReference type="PhylomeDB" id="A9A9U3"/>
<dbReference type="GO" id="GO:0005737">
    <property type="term" value="C:cytoplasm"/>
    <property type="evidence" value="ECO:0007669"/>
    <property type="project" value="UniProtKB-SubCell"/>
</dbReference>
<dbReference type="GO" id="GO:0005525">
    <property type="term" value="F:GTP binding"/>
    <property type="evidence" value="ECO:0007669"/>
    <property type="project" value="UniProtKB-UniRule"/>
</dbReference>
<dbReference type="GO" id="GO:0003924">
    <property type="term" value="F:GTPase activity"/>
    <property type="evidence" value="ECO:0007669"/>
    <property type="project" value="InterPro"/>
</dbReference>
<dbReference type="GO" id="GO:0003746">
    <property type="term" value="F:translation elongation factor activity"/>
    <property type="evidence" value="ECO:0007669"/>
    <property type="project" value="UniProtKB-UniRule"/>
</dbReference>
<dbReference type="CDD" id="cd01883">
    <property type="entry name" value="EF1_alpha"/>
    <property type="match status" value="1"/>
</dbReference>
<dbReference type="CDD" id="cd03693">
    <property type="entry name" value="EF1_alpha_II"/>
    <property type="match status" value="1"/>
</dbReference>
<dbReference type="CDD" id="cd03705">
    <property type="entry name" value="EF1_alpha_III"/>
    <property type="match status" value="1"/>
</dbReference>
<dbReference type="FunFam" id="2.40.30.10:FF:000003">
    <property type="entry name" value="Elongation factor 1-alpha"/>
    <property type="match status" value="1"/>
</dbReference>
<dbReference type="FunFam" id="2.40.30.10:FF:000005">
    <property type="entry name" value="Elongation factor 1-alpha"/>
    <property type="match status" value="1"/>
</dbReference>
<dbReference type="Gene3D" id="3.40.50.300">
    <property type="entry name" value="P-loop containing nucleotide triphosphate hydrolases"/>
    <property type="match status" value="1"/>
</dbReference>
<dbReference type="Gene3D" id="2.40.30.10">
    <property type="entry name" value="Translation factors"/>
    <property type="match status" value="2"/>
</dbReference>
<dbReference type="HAMAP" id="MF_00118_A">
    <property type="entry name" value="EF_Tu_A"/>
    <property type="match status" value="1"/>
</dbReference>
<dbReference type="InterPro" id="IPR004161">
    <property type="entry name" value="EFTu-like_2"/>
</dbReference>
<dbReference type="InterPro" id="IPR029459">
    <property type="entry name" value="EFTU-type"/>
</dbReference>
<dbReference type="InterPro" id="IPR031157">
    <property type="entry name" value="G_TR_CS"/>
</dbReference>
<dbReference type="InterPro" id="IPR054696">
    <property type="entry name" value="GTP-eEF1A_C"/>
</dbReference>
<dbReference type="InterPro" id="IPR027417">
    <property type="entry name" value="P-loop_NTPase"/>
</dbReference>
<dbReference type="InterPro" id="IPR005225">
    <property type="entry name" value="Small_GTP-bd"/>
</dbReference>
<dbReference type="InterPro" id="IPR000795">
    <property type="entry name" value="T_Tr_GTP-bd_dom"/>
</dbReference>
<dbReference type="InterPro" id="IPR050100">
    <property type="entry name" value="TRAFAC_GTPase_members"/>
</dbReference>
<dbReference type="InterPro" id="IPR009000">
    <property type="entry name" value="Transl_B-barrel_sf"/>
</dbReference>
<dbReference type="InterPro" id="IPR009001">
    <property type="entry name" value="Transl_elong_EF1A/Init_IF2_C"/>
</dbReference>
<dbReference type="InterPro" id="IPR004539">
    <property type="entry name" value="Transl_elong_EF1A_euk/arc"/>
</dbReference>
<dbReference type="NCBIfam" id="TIGR00483">
    <property type="entry name" value="EF-1_alpha"/>
    <property type="match status" value="1"/>
</dbReference>
<dbReference type="NCBIfam" id="NF008969">
    <property type="entry name" value="PRK12317.1"/>
    <property type="match status" value="1"/>
</dbReference>
<dbReference type="NCBIfam" id="TIGR00231">
    <property type="entry name" value="small_GTP"/>
    <property type="match status" value="1"/>
</dbReference>
<dbReference type="PANTHER" id="PTHR23115">
    <property type="entry name" value="TRANSLATION FACTOR"/>
    <property type="match status" value="1"/>
</dbReference>
<dbReference type="Pfam" id="PF22594">
    <property type="entry name" value="GTP-eEF1A_C"/>
    <property type="match status" value="1"/>
</dbReference>
<dbReference type="Pfam" id="PF00009">
    <property type="entry name" value="GTP_EFTU"/>
    <property type="match status" value="1"/>
</dbReference>
<dbReference type="Pfam" id="PF03144">
    <property type="entry name" value="GTP_EFTU_D2"/>
    <property type="match status" value="1"/>
</dbReference>
<dbReference type="Pfam" id="PF14578">
    <property type="entry name" value="GTP_EFTU_D4"/>
    <property type="match status" value="1"/>
</dbReference>
<dbReference type="PRINTS" id="PR00315">
    <property type="entry name" value="ELONGATNFCT"/>
</dbReference>
<dbReference type="SUPFAM" id="SSF50465">
    <property type="entry name" value="EF-Tu/eEF-1alpha/eIF2-gamma C-terminal domain"/>
    <property type="match status" value="1"/>
</dbReference>
<dbReference type="SUPFAM" id="SSF52540">
    <property type="entry name" value="P-loop containing nucleoside triphosphate hydrolases"/>
    <property type="match status" value="1"/>
</dbReference>
<dbReference type="SUPFAM" id="SSF50447">
    <property type="entry name" value="Translation proteins"/>
    <property type="match status" value="1"/>
</dbReference>
<dbReference type="PROSITE" id="PS00301">
    <property type="entry name" value="G_TR_1"/>
    <property type="match status" value="1"/>
</dbReference>
<dbReference type="PROSITE" id="PS51722">
    <property type="entry name" value="G_TR_2"/>
    <property type="match status" value="1"/>
</dbReference>
<gene>
    <name evidence="2" type="primary">tuf</name>
    <name type="ordered locus">MmarC6_1303</name>
</gene>
<organism>
    <name type="scientific">Methanococcus maripaludis (strain C6 / ATCC BAA-1332)</name>
    <dbReference type="NCBI Taxonomy" id="444158"/>
    <lineage>
        <taxon>Archaea</taxon>
        <taxon>Methanobacteriati</taxon>
        <taxon>Methanobacteriota</taxon>
        <taxon>Methanomada group</taxon>
        <taxon>Methanococci</taxon>
        <taxon>Methanococcales</taxon>
        <taxon>Methanococcaceae</taxon>
        <taxon>Methanococcus</taxon>
    </lineage>
</organism>
<accession>A9A9U3</accession>
<protein>
    <recommendedName>
        <fullName evidence="2">Elongation factor 1-alpha</fullName>
        <shortName evidence="2">EF-1-alpha</shortName>
        <ecNumber evidence="2">3.6.5.3</ecNumber>
    </recommendedName>
    <alternativeName>
        <fullName evidence="2">Elongation factor Tu</fullName>
        <shortName evidence="2">EF-Tu</shortName>
    </alternativeName>
</protein>
<keyword id="KW-0963">Cytoplasm</keyword>
<keyword id="KW-0251">Elongation factor</keyword>
<keyword id="KW-0342">GTP-binding</keyword>
<keyword id="KW-0378">Hydrolase</keyword>
<keyword id="KW-0460">Magnesium</keyword>
<keyword id="KW-0479">Metal-binding</keyword>
<keyword id="KW-0547">Nucleotide-binding</keyword>
<keyword id="KW-0648">Protein biosynthesis</keyword>
<reference key="1">
    <citation type="submission" date="2007-10" db="EMBL/GenBank/DDBJ databases">
        <title>Complete sequence of Methanococcus maripaludis C6.</title>
        <authorList>
            <consortium name="US DOE Joint Genome Institute"/>
            <person name="Copeland A."/>
            <person name="Lucas S."/>
            <person name="Lapidus A."/>
            <person name="Barry K."/>
            <person name="Glavina del Rio T."/>
            <person name="Dalin E."/>
            <person name="Tice H."/>
            <person name="Pitluck S."/>
            <person name="Clum A."/>
            <person name="Schmutz J."/>
            <person name="Larimer F."/>
            <person name="Land M."/>
            <person name="Hauser L."/>
            <person name="Kyrpides N."/>
            <person name="Mikhailova N."/>
            <person name="Sieprawska-Lupa M."/>
            <person name="Whitman W.B."/>
            <person name="Richardson P."/>
        </authorList>
    </citation>
    <scope>NUCLEOTIDE SEQUENCE [LARGE SCALE GENOMIC DNA]</scope>
    <source>
        <strain>C6 / ATCC BAA-1332</strain>
    </source>
</reference>
<sequence length="428" mass="46406">MAKEKPILNVAFIGHVDAGKSTTVGRLLLDGGAIDPQLIVRLRKEAEEKGKAGFEFAYVMDGLKEERERGVTIDVAHKKFPTAKYEVTIVDCPGHRDFIKNMITGASQADAAILVVNVDDAKSGIQPQTREHVFLSRTLGISQLAVAINKMDTVNFSEADYNEMKKMLGDQLLKMVGFNPANITFVPVASLHGDNVFKKSDRTPWYNGPTLAEVIDAFQPPEKPTTLPLRLPIQDVYSITGVGTVPVGRVETGIIKPGDKVIFEPAGAVGEIKTVEMHHEQLPSAEPGDNIGFNVRGVGKKDIKRGDVLGHTTNPPTVAADFTAQIVVLQHPSVMTVGYTPVFHAHTAQIACTFMELQKKLNPATGEVLEENPDFLKAGDAAIVKLMPTKPLVMESVKEIPQLGRFAIRDMGMTVAAGMAIQVTAKNK</sequence>
<proteinExistence type="inferred from homology"/>
<evidence type="ECO:0000250" key="1"/>
<evidence type="ECO:0000255" key="2">
    <source>
        <dbReference type="HAMAP-Rule" id="MF_00118"/>
    </source>
</evidence>
<name>EF1A_METM6</name>
<comment type="function">
    <text evidence="2">GTP hydrolase that promotes the GTP-dependent binding of aminoacyl-tRNA to the A-site of ribosomes during protein biosynthesis.</text>
</comment>
<comment type="catalytic activity">
    <reaction evidence="2">
        <text>GTP + H2O = GDP + phosphate + H(+)</text>
        <dbReference type="Rhea" id="RHEA:19669"/>
        <dbReference type="ChEBI" id="CHEBI:15377"/>
        <dbReference type="ChEBI" id="CHEBI:15378"/>
        <dbReference type="ChEBI" id="CHEBI:37565"/>
        <dbReference type="ChEBI" id="CHEBI:43474"/>
        <dbReference type="ChEBI" id="CHEBI:58189"/>
        <dbReference type="EC" id="3.6.5.3"/>
    </reaction>
    <physiologicalReaction direction="left-to-right" evidence="2">
        <dbReference type="Rhea" id="RHEA:19670"/>
    </physiologicalReaction>
</comment>
<comment type="subcellular location">
    <subcellularLocation>
        <location evidence="2">Cytoplasm</location>
    </subcellularLocation>
</comment>
<comment type="similarity">
    <text evidence="2">Belongs to the TRAFAC class translation factor GTPase superfamily. Classic translation factor GTPase family. EF-Tu/EF-1A subfamily.</text>
</comment>